<feature type="chain" id="PRO_0000277711" description="Integration host factor subunit alpha">
    <location>
        <begin position="1"/>
        <end position="113"/>
    </location>
</feature>
<feature type="region of interest" description="Disordered" evidence="2">
    <location>
        <begin position="88"/>
        <end position="113"/>
    </location>
</feature>
<feature type="compositionally biased region" description="Acidic residues" evidence="2">
    <location>
        <begin position="95"/>
        <end position="113"/>
    </location>
</feature>
<protein>
    <recommendedName>
        <fullName evidence="1">Integration host factor subunit alpha</fullName>
        <shortName evidence="1">IHF-alpha</shortName>
    </recommendedName>
</protein>
<comment type="function">
    <text evidence="1">This protein is one of the two subunits of integration host factor, a specific DNA-binding protein that functions in genetic recombination as well as in transcriptional and translational control.</text>
</comment>
<comment type="subunit">
    <text evidence="1">Heterodimer of an alpha and a beta chain.</text>
</comment>
<comment type="similarity">
    <text evidence="1">Belongs to the bacterial histone-like protein family.</text>
</comment>
<reference key="1">
    <citation type="submission" date="2006-01" db="EMBL/GenBank/DDBJ databases">
        <title>Complete sequence of Anaeromyxobacter dehalogenans 2CP-C.</title>
        <authorList>
            <person name="Copeland A."/>
            <person name="Lucas S."/>
            <person name="Lapidus A."/>
            <person name="Barry K."/>
            <person name="Detter J.C."/>
            <person name="Glavina T."/>
            <person name="Hammon N."/>
            <person name="Israni S."/>
            <person name="Pitluck S."/>
            <person name="Brettin T."/>
            <person name="Bruce D."/>
            <person name="Han C."/>
            <person name="Tapia R."/>
            <person name="Gilna P."/>
            <person name="Kiss H."/>
            <person name="Schmutz J."/>
            <person name="Larimer F."/>
            <person name="Land M."/>
            <person name="Kyrpides N."/>
            <person name="Anderson I."/>
            <person name="Sanford R.A."/>
            <person name="Ritalahti K.M."/>
            <person name="Thomas H.S."/>
            <person name="Kirby J.R."/>
            <person name="Zhulin I.B."/>
            <person name="Loeffler F.E."/>
            <person name="Richardson P."/>
        </authorList>
    </citation>
    <scope>NUCLEOTIDE SEQUENCE [LARGE SCALE GENOMIC DNA]</scope>
    <source>
        <strain>2CP-C</strain>
    </source>
</reference>
<dbReference type="EMBL" id="CP000251">
    <property type="protein sequence ID" value="ABC81740.1"/>
    <property type="molecule type" value="Genomic_DNA"/>
</dbReference>
<dbReference type="RefSeq" id="WP_011421022.1">
    <property type="nucleotide sequence ID" value="NC_007760.1"/>
</dbReference>
<dbReference type="SMR" id="Q2IJA7"/>
<dbReference type="STRING" id="290397.Adeh_1969"/>
<dbReference type="KEGG" id="ade:Adeh_1969"/>
<dbReference type="eggNOG" id="COG0776">
    <property type="taxonomic scope" value="Bacteria"/>
</dbReference>
<dbReference type="HOGENOM" id="CLU_105066_1_3_7"/>
<dbReference type="OrthoDB" id="9797747at2"/>
<dbReference type="Proteomes" id="UP000001935">
    <property type="component" value="Chromosome"/>
</dbReference>
<dbReference type="GO" id="GO:0005829">
    <property type="term" value="C:cytosol"/>
    <property type="evidence" value="ECO:0007669"/>
    <property type="project" value="TreeGrafter"/>
</dbReference>
<dbReference type="GO" id="GO:0003677">
    <property type="term" value="F:DNA binding"/>
    <property type="evidence" value="ECO:0007669"/>
    <property type="project" value="UniProtKB-UniRule"/>
</dbReference>
<dbReference type="GO" id="GO:0030527">
    <property type="term" value="F:structural constituent of chromatin"/>
    <property type="evidence" value="ECO:0007669"/>
    <property type="project" value="InterPro"/>
</dbReference>
<dbReference type="GO" id="GO:0006310">
    <property type="term" value="P:DNA recombination"/>
    <property type="evidence" value="ECO:0007669"/>
    <property type="project" value="UniProtKB-UniRule"/>
</dbReference>
<dbReference type="GO" id="GO:0009893">
    <property type="term" value="P:positive regulation of metabolic process"/>
    <property type="evidence" value="ECO:0007669"/>
    <property type="project" value="UniProtKB-ARBA"/>
</dbReference>
<dbReference type="GO" id="GO:0006355">
    <property type="term" value="P:regulation of DNA-templated transcription"/>
    <property type="evidence" value="ECO:0007669"/>
    <property type="project" value="UniProtKB-UniRule"/>
</dbReference>
<dbReference type="GO" id="GO:0006417">
    <property type="term" value="P:regulation of translation"/>
    <property type="evidence" value="ECO:0007669"/>
    <property type="project" value="UniProtKB-UniRule"/>
</dbReference>
<dbReference type="CDD" id="cd13835">
    <property type="entry name" value="IHF_A"/>
    <property type="match status" value="1"/>
</dbReference>
<dbReference type="FunFam" id="4.10.520.10:FF:000010">
    <property type="entry name" value="Integration host factor subunit alpha"/>
    <property type="match status" value="1"/>
</dbReference>
<dbReference type="Gene3D" id="4.10.520.10">
    <property type="entry name" value="IHF-like DNA-binding proteins"/>
    <property type="match status" value="1"/>
</dbReference>
<dbReference type="HAMAP" id="MF_00380">
    <property type="entry name" value="IHF_alpha"/>
    <property type="match status" value="1"/>
</dbReference>
<dbReference type="InterPro" id="IPR000119">
    <property type="entry name" value="Hist_DNA-bd"/>
</dbReference>
<dbReference type="InterPro" id="IPR020816">
    <property type="entry name" value="Histone-like_DNA-bd_CS"/>
</dbReference>
<dbReference type="InterPro" id="IPR010992">
    <property type="entry name" value="IHF-like_DNA-bd_dom_sf"/>
</dbReference>
<dbReference type="InterPro" id="IPR005684">
    <property type="entry name" value="IHF_alpha"/>
</dbReference>
<dbReference type="NCBIfam" id="TIGR00987">
    <property type="entry name" value="himA"/>
    <property type="match status" value="1"/>
</dbReference>
<dbReference type="NCBIfam" id="NF001401">
    <property type="entry name" value="PRK00285.1"/>
    <property type="match status" value="1"/>
</dbReference>
<dbReference type="PANTHER" id="PTHR33175">
    <property type="entry name" value="DNA-BINDING PROTEIN HU"/>
    <property type="match status" value="1"/>
</dbReference>
<dbReference type="PANTHER" id="PTHR33175:SF2">
    <property type="entry name" value="INTEGRATION HOST FACTOR SUBUNIT ALPHA"/>
    <property type="match status" value="1"/>
</dbReference>
<dbReference type="Pfam" id="PF00216">
    <property type="entry name" value="Bac_DNA_binding"/>
    <property type="match status" value="1"/>
</dbReference>
<dbReference type="PRINTS" id="PR01727">
    <property type="entry name" value="DNABINDINGHU"/>
</dbReference>
<dbReference type="SMART" id="SM00411">
    <property type="entry name" value="BHL"/>
    <property type="match status" value="1"/>
</dbReference>
<dbReference type="SUPFAM" id="SSF47729">
    <property type="entry name" value="IHF-like DNA-binding proteins"/>
    <property type="match status" value="1"/>
</dbReference>
<dbReference type="PROSITE" id="PS00045">
    <property type="entry name" value="HISTONE_LIKE"/>
    <property type="match status" value="1"/>
</dbReference>
<keyword id="KW-0233">DNA recombination</keyword>
<keyword id="KW-0238">DNA-binding</keyword>
<keyword id="KW-1185">Reference proteome</keyword>
<keyword id="KW-0804">Transcription</keyword>
<keyword id="KW-0805">Transcription regulation</keyword>
<keyword id="KW-0810">Translation regulation</keyword>
<evidence type="ECO:0000255" key="1">
    <source>
        <dbReference type="HAMAP-Rule" id="MF_00380"/>
    </source>
</evidence>
<evidence type="ECO:0000256" key="2">
    <source>
        <dbReference type="SAM" id="MobiDB-lite"/>
    </source>
</evidence>
<proteinExistence type="inferred from homology"/>
<accession>Q2IJA7</accession>
<name>IHFA_ANADE</name>
<gene>
    <name evidence="1" type="primary">ihfA</name>
    <name evidence="1" type="synonym">himA</name>
    <name type="ordered locus">Adeh_1969</name>
</gene>
<sequence>MTKADIIESVYEKVGFSKKEAAEIVEMVFDTIKETLERGEKIKISGFGNFIVRDKKSRVGRNPQTGEEIEISARRVLTFRPSQVLKNALNGGVSDETEGADDDDDDEEGEGDE</sequence>
<organism>
    <name type="scientific">Anaeromyxobacter dehalogenans (strain 2CP-C)</name>
    <dbReference type="NCBI Taxonomy" id="290397"/>
    <lineage>
        <taxon>Bacteria</taxon>
        <taxon>Pseudomonadati</taxon>
        <taxon>Myxococcota</taxon>
        <taxon>Myxococcia</taxon>
        <taxon>Myxococcales</taxon>
        <taxon>Cystobacterineae</taxon>
        <taxon>Anaeromyxobacteraceae</taxon>
        <taxon>Anaeromyxobacter</taxon>
    </lineage>
</organism>